<gene>
    <name evidence="1" type="primary">atpH</name>
    <name type="ordered locus">Krad_1267</name>
</gene>
<reference key="1">
    <citation type="journal article" date="2008" name="PLoS ONE">
        <title>Survival in nuclear waste, extreme resistance, and potential applications gleaned from the genome sequence of Kineococcus radiotolerans SRS30216.</title>
        <authorList>
            <person name="Bagwell C.E."/>
            <person name="Bhat S."/>
            <person name="Hawkins G.M."/>
            <person name="Smith B.W."/>
            <person name="Biswas T."/>
            <person name="Hoover T.R."/>
            <person name="Saunders E."/>
            <person name="Han C.S."/>
            <person name="Tsodikov O.V."/>
            <person name="Shimkets L.J."/>
        </authorList>
    </citation>
    <scope>NUCLEOTIDE SEQUENCE [LARGE SCALE GENOMIC DNA]</scope>
    <source>
        <strain>ATCC BAA-149 / DSM 14245 / SRS30216</strain>
    </source>
</reference>
<dbReference type="EMBL" id="CP000750">
    <property type="protein sequence ID" value="ABS02755.1"/>
    <property type="molecule type" value="Genomic_DNA"/>
</dbReference>
<dbReference type="RefSeq" id="WP_012084389.1">
    <property type="nucleotide sequence ID" value="NC_009664.2"/>
</dbReference>
<dbReference type="SMR" id="A6W7G6"/>
<dbReference type="STRING" id="266940.Krad_1267"/>
<dbReference type="KEGG" id="kra:Krad_1267"/>
<dbReference type="eggNOG" id="COG0712">
    <property type="taxonomic scope" value="Bacteria"/>
</dbReference>
<dbReference type="HOGENOM" id="CLU_088880_0_0_11"/>
<dbReference type="OrthoDB" id="5242917at2"/>
<dbReference type="Proteomes" id="UP000001116">
    <property type="component" value="Chromosome"/>
</dbReference>
<dbReference type="GO" id="GO:0005886">
    <property type="term" value="C:plasma membrane"/>
    <property type="evidence" value="ECO:0007669"/>
    <property type="project" value="UniProtKB-SubCell"/>
</dbReference>
<dbReference type="GO" id="GO:0045259">
    <property type="term" value="C:proton-transporting ATP synthase complex"/>
    <property type="evidence" value="ECO:0007669"/>
    <property type="project" value="UniProtKB-KW"/>
</dbReference>
<dbReference type="GO" id="GO:0046933">
    <property type="term" value="F:proton-transporting ATP synthase activity, rotational mechanism"/>
    <property type="evidence" value="ECO:0007669"/>
    <property type="project" value="UniProtKB-UniRule"/>
</dbReference>
<dbReference type="HAMAP" id="MF_01416">
    <property type="entry name" value="ATP_synth_delta_bact"/>
    <property type="match status" value="1"/>
</dbReference>
<dbReference type="InterPro" id="IPR000711">
    <property type="entry name" value="ATPase_OSCP/dsu"/>
</dbReference>
<dbReference type="NCBIfam" id="TIGR01145">
    <property type="entry name" value="ATP_synt_delta"/>
    <property type="match status" value="1"/>
</dbReference>
<dbReference type="NCBIfam" id="NF009967">
    <property type="entry name" value="PRK13430.1"/>
    <property type="match status" value="1"/>
</dbReference>
<dbReference type="PANTHER" id="PTHR11910">
    <property type="entry name" value="ATP SYNTHASE DELTA CHAIN"/>
    <property type="match status" value="1"/>
</dbReference>
<dbReference type="Pfam" id="PF00213">
    <property type="entry name" value="OSCP"/>
    <property type="match status" value="1"/>
</dbReference>
<dbReference type="PRINTS" id="PR00125">
    <property type="entry name" value="ATPASEDELTA"/>
</dbReference>
<accession>A6W7G6</accession>
<sequence>MSGELDAGVAKASLAAAQQVLDVQLSAEGADAGKTGEDLFAVTSLLDSSVGLRRALTDPSRSGAAKAEFVRRTLSGRITPAALETVVALASARWAAGRDLSDATERLAVVAVVTQAERSGHLDALEDELFRFARTVAGSPALRDALADRTAPDANRASLAARLLLGKASPETVQLARRAASSSRGMRAERLLEEWVEVVAKRREQLVAHVVSATPLTDAQRERLAATLSRQYGRAIRVNLDVDPHLVGGLRVSVGDDVIDGSISTRLDEARRRLAG</sequence>
<keyword id="KW-0066">ATP synthesis</keyword>
<keyword id="KW-1003">Cell membrane</keyword>
<keyword id="KW-0139">CF(1)</keyword>
<keyword id="KW-0375">Hydrogen ion transport</keyword>
<keyword id="KW-0406">Ion transport</keyword>
<keyword id="KW-0472">Membrane</keyword>
<keyword id="KW-1185">Reference proteome</keyword>
<keyword id="KW-0813">Transport</keyword>
<name>ATPD_KINRD</name>
<proteinExistence type="inferred from homology"/>
<comment type="function">
    <text evidence="1">F(1)F(0) ATP synthase produces ATP from ADP in the presence of a proton or sodium gradient. F-type ATPases consist of two structural domains, F(1) containing the extramembraneous catalytic core and F(0) containing the membrane proton channel, linked together by a central stalk and a peripheral stalk. During catalysis, ATP synthesis in the catalytic domain of F(1) is coupled via a rotary mechanism of the central stalk subunits to proton translocation.</text>
</comment>
<comment type="function">
    <text evidence="1">This protein is part of the stalk that links CF(0) to CF(1). It either transmits conformational changes from CF(0) to CF(1) or is implicated in proton conduction.</text>
</comment>
<comment type="subunit">
    <text evidence="1">F-type ATPases have 2 components, F(1) - the catalytic core - and F(0) - the membrane proton channel. F(1) has five subunits: alpha(3), beta(3), gamma(1), delta(1), epsilon(1). F(0) has three main subunits: a(1), b(2) and c(10-14). The alpha and beta chains form an alternating ring which encloses part of the gamma chain. F(1) is attached to F(0) by a central stalk formed by the gamma and epsilon chains, while a peripheral stalk is formed by the delta and b chains.</text>
</comment>
<comment type="subcellular location">
    <subcellularLocation>
        <location evidence="1">Cell membrane</location>
        <topology evidence="1">Peripheral membrane protein</topology>
    </subcellularLocation>
</comment>
<comment type="similarity">
    <text evidence="1">Belongs to the ATPase delta chain family.</text>
</comment>
<evidence type="ECO:0000255" key="1">
    <source>
        <dbReference type="HAMAP-Rule" id="MF_01416"/>
    </source>
</evidence>
<organism>
    <name type="scientific">Kineococcus radiotolerans (strain ATCC BAA-149 / DSM 14245 / SRS30216)</name>
    <dbReference type="NCBI Taxonomy" id="266940"/>
    <lineage>
        <taxon>Bacteria</taxon>
        <taxon>Bacillati</taxon>
        <taxon>Actinomycetota</taxon>
        <taxon>Actinomycetes</taxon>
        <taxon>Kineosporiales</taxon>
        <taxon>Kineosporiaceae</taxon>
        <taxon>Kineococcus</taxon>
    </lineage>
</organism>
<feature type="chain" id="PRO_0000371004" description="ATP synthase subunit delta">
    <location>
        <begin position="1"/>
        <end position="276"/>
    </location>
</feature>
<protein>
    <recommendedName>
        <fullName evidence="1">ATP synthase subunit delta</fullName>
    </recommendedName>
    <alternativeName>
        <fullName evidence="1">ATP synthase F(1) sector subunit delta</fullName>
    </alternativeName>
    <alternativeName>
        <fullName evidence="1">F-type ATPase subunit delta</fullName>
        <shortName evidence="1">F-ATPase subunit delta</shortName>
    </alternativeName>
</protein>